<protein>
    <recommendedName>
        <fullName evidence="1">ATP-dependent Clp protease proteolytic subunit</fullName>
        <ecNumber evidence="1">3.4.21.92</ecNumber>
    </recommendedName>
    <alternativeName>
        <fullName evidence="1">Endopeptidase Clp</fullName>
    </alternativeName>
</protein>
<gene>
    <name evidence="1" type="primary">clpP</name>
    <name type="ordered locus">SGO_1632</name>
</gene>
<organism>
    <name type="scientific">Streptococcus gordonii (strain Challis / ATCC 35105 / BCRC 15272 / CH1 / DL1 / V288)</name>
    <dbReference type="NCBI Taxonomy" id="467705"/>
    <lineage>
        <taxon>Bacteria</taxon>
        <taxon>Bacillati</taxon>
        <taxon>Bacillota</taxon>
        <taxon>Bacilli</taxon>
        <taxon>Lactobacillales</taxon>
        <taxon>Streptococcaceae</taxon>
        <taxon>Streptococcus</taxon>
    </lineage>
</organism>
<feature type="chain" id="PRO_1000080905" description="ATP-dependent Clp protease proteolytic subunit">
    <location>
        <begin position="1"/>
        <end position="196"/>
    </location>
</feature>
<feature type="active site" description="Nucleophile" evidence="1">
    <location>
        <position position="96"/>
    </location>
</feature>
<feature type="active site" evidence="1">
    <location>
        <position position="121"/>
    </location>
</feature>
<proteinExistence type="inferred from homology"/>
<comment type="function">
    <text evidence="1">Cleaves peptides in various proteins in a process that requires ATP hydrolysis. Has a chymotrypsin-like activity. Plays a major role in the degradation of misfolded proteins.</text>
</comment>
<comment type="catalytic activity">
    <reaction evidence="1">
        <text>Hydrolysis of proteins to small peptides in the presence of ATP and magnesium. alpha-casein is the usual test substrate. In the absence of ATP, only oligopeptides shorter than five residues are hydrolyzed (such as succinyl-Leu-Tyr-|-NHMec, and Leu-Tyr-Leu-|-Tyr-Trp, in which cleavage of the -Tyr-|-Leu- and -Tyr-|-Trp bonds also occurs).</text>
        <dbReference type="EC" id="3.4.21.92"/>
    </reaction>
</comment>
<comment type="subunit">
    <text evidence="1">Fourteen ClpP subunits assemble into 2 heptameric rings which stack back to back to give a disk-like structure with a central cavity, resembling the structure of eukaryotic proteasomes.</text>
</comment>
<comment type="subcellular location">
    <subcellularLocation>
        <location evidence="1">Cytoplasm</location>
    </subcellularLocation>
</comment>
<comment type="similarity">
    <text evidence="1">Belongs to the peptidase S14 family.</text>
</comment>
<keyword id="KW-0963">Cytoplasm</keyword>
<keyword id="KW-0378">Hydrolase</keyword>
<keyword id="KW-0645">Protease</keyword>
<keyword id="KW-1185">Reference proteome</keyword>
<keyword id="KW-0720">Serine protease</keyword>
<name>CLPP_STRGC</name>
<evidence type="ECO:0000255" key="1">
    <source>
        <dbReference type="HAMAP-Rule" id="MF_00444"/>
    </source>
</evidence>
<accession>A8AYP9</accession>
<sequence length="196" mass="21376">MIPVVIEQTSRGERSYDIYSRLLKDRIIMLTGPVEDNMANSVIAQLLFLDAQDSTKDIYLYVNTPGGSVSAGLAIVDTMNFIKSDVQTIVMGMAASMGTIIASSGAKGKRFMLPNAEYMIHQPMGGTGGGTQQTDMAIAAEHLLKTRKTLEQILADNSGKTVEQIHADAERDYWMSAEETLAYGFIDEIMANNNLS</sequence>
<reference key="1">
    <citation type="journal article" date="2007" name="J. Bacteriol.">
        <title>Genome-wide transcriptional changes in Streptococcus gordonii in response to competence signaling peptide.</title>
        <authorList>
            <person name="Vickerman M.M."/>
            <person name="Iobst S."/>
            <person name="Jesionowski A.M."/>
            <person name="Gill S.R."/>
        </authorList>
    </citation>
    <scope>NUCLEOTIDE SEQUENCE [LARGE SCALE GENOMIC DNA]</scope>
    <source>
        <strain>Challis / ATCC 35105 / BCRC 15272 / CH1 / DL1 / V288</strain>
    </source>
</reference>
<dbReference type="EC" id="3.4.21.92" evidence="1"/>
<dbReference type="EMBL" id="CP000725">
    <property type="protein sequence ID" value="ABV11022.1"/>
    <property type="molecule type" value="Genomic_DNA"/>
</dbReference>
<dbReference type="SMR" id="A8AYP9"/>
<dbReference type="STRING" id="467705.SGO_1632"/>
<dbReference type="MEROPS" id="S14.001"/>
<dbReference type="KEGG" id="sgo:SGO_1632"/>
<dbReference type="eggNOG" id="COG0740">
    <property type="taxonomic scope" value="Bacteria"/>
</dbReference>
<dbReference type="HOGENOM" id="CLU_058707_3_2_9"/>
<dbReference type="Proteomes" id="UP000001131">
    <property type="component" value="Chromosome"/>
</dbReference>
<dbReference type="GO" id="GO:0005737">
    <property type="term" value="C:cytoplasm"/>
    <property type="evidence" value="ECO:0007669"/>
    <property type="project" value="UniProtKB-SubCell"/>
</dbReference>
<dbReference type="GO" id="GO:0009368">
    <property type="term" value="C:endopeptidase Clp complex"/>
    <property type="evidence" value="ECO:0007669"/>
    <property type="project" value="TreeGrafter"/>
</dbReference>
<dbReference type="GO" id="GO:0004176">
    <property type="term" value="F:ATP-dependent peptidase activity"/>
    <property type="evidence" value="ECO:0007669"/>
    <property type="project" value="InterPro"/>
</dbReference>
<dbReference type="GO" id="GO:0051117">
    <property type="term" value="F:ATPase binding"/>
    <property type="evidence" value="ECO:0007669"/>
    <property type="project" value="TreeGrafter"/>
</dbReference>
<dbReference type="GO" id="GO:0004252">
    <property type="term" value="F:serine-type endopeptidase activity"/>
    <property type="evidence" value="ECO:0007669"/>
    <property type="project" value="UniProtKB-UniRule"/>
</dbReference>
<dbReference type="GO" id="GO:0006515">
    <property type="term" value="P:protein quality control for misfolded or incompletely synthesized proteins"/>
    <property type="evidence" value="ECO:0007669"/>
    <property type="project" value="TreeGrafter"/>
</dbReference>
<dbReference type="CDD" id="cd07017">
    <property type="entry name" value="S14_ClpP_2"/>
    <property type="match status" value="1"/>
</dbReference>
<dbReference type="FunFam" id="3.90.226.10:FF:000014">
    <property type="entry name" value="ATP-dependent Clp protease proteolytic subunit"/>
    <property type="match status" value="1"/>
</dbReference>
<dbReference type="Gene3D" id="3.90.226.10">
    <property type="entry name" value="2-enoyl-CoA Hydratase, Chain A, domain 1"/>
    <property type="match status" value="1"/>
</dbReference>
<dbReference type="HAMAP" id="MF_00444">
    <property type="entry name" value="ClpP"/>
    <property type="match status" value="1"/>
</dbReference>
<dbReference type="InterPro" id="IPR001907">
    <property type="entry name" value="ClpP"/>
</dbReference>
<dbReference type="InterPro" id="IPR029045">
    <property type="entry name" value="ClpP/crotonase-like_dom_sf"/>
</dbReference>
<dbReference type="InterPro" id="IPR023562">
    <property type="entry name" value="ClpP/TepA"/>
</dbReference>
<dbReference type="InterPro" id="IPR033135">
    <property type="entry name" value="ClpP_His_AS"/>
</dbReference>
<dbReference type="InterPro" id="IPR018215">
    <property type="entry name" value="ClpP_Ser_AS"/>
</dbReference>
<dbReference type="NCBIfam" id="NF001368">
    <property type="entry name" value="PRK00277.1"/>
    <property type="match status" value="1"/>
</dbReference>
<dbReference type="NCBIfam" id="NF009205">
    <property type="entry name" value="PRK12553.1"/>
    <property type="match status" value="1"/>
</dbReference>
<dbReference type="PANTHER" id="PTHR10381">
    <property type="entry name" value="ATP-DEPENDENT CLP PROTEASE PROTEOLYTIC SUBUNIT"/>
    <property type="match status" value="1"/>
</dbReference>
<dbReference type="PANTHER" id="PTHR10381:SF70">
    <property type="entry name" value="ATP-DEPENDENT CLP PROTEASE PROTEOLYTIC SUBUNIT"/>
    <property type="match status" value="1"/>
</dbReference>
<dbReference type="Pfam" id="PF00574">
    <property type="entry name" value="CLP_protease"/>
    <property type="match status" value="1"/>
</dbReference>
<dbReference type="PRINTS" id="PR00127">
    <property type="entry name" value="CLPPROTEASEP"/>
</dbReference>
<dbReference type="SUPFAM" id="SSF52096">
    <property type="entry name" value="ClpP/crotonase"/>
    <property type="match status" value="1"/>
</dbReference>
<dbReference type="PROSITE" id="PS00382">
    <property type="entry name" value="CLP_PROTEASE_HIS"/>
    <property type="match status" value="1"/>
</dbReference>
<dbReference type="PROSITE" id="PS00381">
    <property type="entry name" value="CLP_PROTEASE_SER"/>
    <property type="match status" value="1"/>
</dbReference>